<dbReference type="EMBL" id="CP000562">
    <property type="protein sequence ID" value="ABN56394.1"/>
    <property type="molecule type" value="Genomic_DNA"/>
</dbReference>
<dbReference type="RefSeq" id="WP_011843304.1">
    <property type="nucleotide sequence ID" value="NC_009051.1"/>
</dbReference>
<dbReference type="SMR" id="A3CSP4"/>
<dbReference type="STRING" id="368407.Memar_0461"/>
<dbReference type="GeneID" id="4846305"/>
<dbReference type="GeneID" id="76731029"/>
<dbReference type="KEGG" id="mem:Memar_0461"/>
<dbReference type="eggNOG" id="arCOG01560">
    <property type="taxonomic scope" value="Archaea"/>
</dbReference>
<dbReference type="HOGENOM" id="CLU_002656_3_3_2"/>
<dbReference type="OrthoDB" id="30957at2157"/>
<dbReference type="Proteomes" id="UP000002146">
    <property type="component" value="Chromosome"/>
</dbReference>
<dbReference type="GO" id="GO:0005737">
    <property type="term" value="C:cytoplasm"/>
    <property type="evidence" value="ECO:0007669"/>
    <property type="project" value="TreeGrafter"/>
</dbReference>
<dbReference type="GO" id="GO:0005525">
    <property type="term" value="F:GTP binding"/>
    <property type="evidence" value="ECO:0007669"/>
    <property type="project" value="UniProtKB-KW"/>
</dbReference>
<dbReference type="GO" id="GO:0003924">
    <property type="term" value="F:GTPase activity"/>
    <property type="evidence" value="ECO:0007669"/>
    <property type="project" value="UniProtKB-UniRule"/>
</dbReference>
<dbReference type="GO" id="GO:0003743">
    <property type="term" value="F:translation initiation factor activity"/>
    <property type="evidence" value="ECO:0007669"/>
    <property type="project" value="UniProtKB-UniRule"/>
</dbReference>
<dbReference type="CDD" id="cd03703">
    <property type="entry name" value="aeIF5B_II"/>
    <property type="match status" value="1"/>
</dbReference>
<dbReference type="CDD" id="cd16266">
    <property type="entry name" value="IF2_aeIF5B_IV"/>
    <property type="match status" value="1"/>
</dbReference>
<dbReference type="CDD" id="cd01887">
    <property type="entry name" value="IF2_eIF5B"/>
    <property type="match status" value="1"/>
</dbReference>
<dbReference type="FunFam" id="3.40.50.300:FF:000112">
    <property type="entry name" value="Eukaryotic translation initiation factor 5B"/>
    <property type="match status" value="1"/>
</dbReference>
<dbReference type="Gene3D" id="3.40.50.300">
    <property type="entry name" value="P-loop containing nucleotide triphosphate hydrolases"/>
    <property type="match status" value="1"/>
</dbReference>
<dbReference type="Gene3D" id="2.40.30.10">
    <property type="entry name" value="Translation factors"/>
    <property type="match status" value="2"/>
</dbReference>
<dbReference type="Gene3D" id="3.40.50.10050">
    <property type="entry name" value="Translation initiation factor IF- 2, domain 3"/>
    <property type="match status" value="1"/>
</dbReference>
<dbReference type="HAMAP" id="MF_00100_A">
    <property type="entry name" value="IF_2_A"/>
    <property type="match status" value="1"/>
</dbReference>
<dbReference type="InterPro" id="IPR029459">
    <property type="entry name" value="EFTU-type"/>
</dbReference>
<dbReference type="InterPro" id="IPR027417">
    <property type="entry name" value="P-loop_NTPase"/>
</dbReference>
<dbReference type="InterPro" id="IPR005225">
    <property type="entry name" value="Small_GTP-bd"/>
</dbReference>
<dbReference type="InterPro" id="IPR000795">
    <property type="entry name" value="T_Tr_GTP-bd_dom"/>
</dbReference>
<dbReference type="InterPro" id="IPR004544">
    <property type="entry name" value="TF_aIF-2_arc"/>
</dbReference>
<dbReference type="InterPro" id="IPR015760">
    <property type="entry name" value="TIF_IF2"/>
</dbReference>
<dbReference type="InterPro" id="IPR023115">
    <property type="entry name" value="TIF_IF2_dom3"/>
</dbReference>
<dbReference type="InterPro" id="IPR036925">
    <property type="entry name" value="TIF_IF2_dom3_sf"/>
</dbReference>
<dbReference type="InterPro" id="IPR009000">
    <property type="entry name" value="Transl_B-barrel_sf"/>
</dbReference>
<dbReference type="NCBIfam" id="TIGR00491">
    <property type="entry name" value="aIF-2"/>
    <property type="match status" value="1"/>
</dbReference>
<dbReference type="NCBIfam" id="NF003078">
    <property type="entry name" value="PRK04004.1"/>
    <property type="match status" value="1"/>
</dbReference>
<dbReference type="NCBIfam" id="TIGR00231">
    <property type="entry name" value="small_GTP"/>
    <property type="match status" value="1"/>
</dbReference>
<dbReference type="PANTHER" id="PTHR43381:SF4">
    <property type="entry name" value="EUKARYOTIC TRANSLATION INITIATION FACTOR 5B"/>
    <property type="match status" value="1"/>
</dbReference>
<dbReference type="PANTHER" id="PTHR43381">
    <property type="entry name" value="TRANSLATION INITIATION FACTOR IF-2-RELATED"/>
    <property type="match status" value="1"/>
</dbReference>
<dbReference type="Pfam" id="PF00009">
    <property type="entry name" value="GTP_EFTU"/>
    <property type="match status" value="1"/>
</dbReference>
<dbReference type="Pfam" id="PF14578">
    <property type="entry name" value="GTP_EFTU_D4"/>
    <property type="match status" value="1"/>
</dbReference>
<dbReference type="Pfam" id="PF11987">
    <property type="entry name" value="IF-2"/>
    <property type="match status" value="1"/>
</dbReference>
<dbReference type="PRINTS" id="PR00315">
    <property type="entry name" value="ELONGATNFCT"/>
</dbReference>
<dbReference type="SUPFAM" id="SSF52156">
    <property type="entry name" value="Initiation factor IF2/eIF5b, domain 3"/>
    <property type="match status" value="1"/>
</dbReference>
<dbReference type="SUPFAM" id="SSF52540">
    <property type="entry name" value="P-loop containing nucleoside triphosphate hydrolases"/>
    <property type="match status" value="1"/>
</dbReference>
<dbReference type="SUPFAM" id="SSF50447">
    <property type="entry name" value="Translation proteins"/>
    <property type="match status" value="1"/>
</dbReference>
<dbReference type="PROSITE" id="PS51722">
    <property type="entry name" value="G_TR_2"/>
    <property type="match status" value="1"/>
</dbReference>
<comment type="function">
    <text evidence="2">Function in general translation initiation by promoting the binding of the formylmethionine-tRNA to ribosomes. Seems to function along with eIF-2.</text>
</comment>
<comment type="similarity">
    <text evidence="2">Belongs to the TRAFAC class translation factor GTPase superfamily. Classic translation factor GTPase family. IF-2 subfamily.</text>
</comment>
<protein>
    <recommendedName>
        <fullName evidence="2">Probable translation initiation factor IF-2</fullName>
    </recommendedName>
</protein>
<evidence type="ECO:0000250" key="1"/>
<evidence type="ECO:0000255" key="2">
    <source>
        <dbReference type="HAMAP-Rule" id="MF_00100"/>
    </source>
</evidence>
<proteinExistence type="inferred from homology"/>
<accession>A3CSP4</accession>
<sequence>MAKESTIRTPIVCVMGHVDHGKTSLLDRIRGSSVVSTEEGEITQHIGATLVPIDAVTRMGGALSKVSVNVPGLLFIDTPGHHAFTTLRARGGALADMAIVVVDINEGFRPQTIEALQILRNYKTPFVIAANKVDRIHGWRVQENQPFLKTFAQQNERVQGMVETKVYELVGKLSDLGFNSERFDRVSDFARNICIVPTSALTGEGLPDILMVLIGLAQRYMTESLKVSADGPGAGTVLEVKEERGLGMTLDLILYDGTLKVGDEIVVAGNDQIIETKVRSLLKPRPMSEILIEERFERVKSVTAAAGIKVAAPKLDGVIAGSPLRAVRSGNRDEVIEQVRREVQDIEVNLSDVGVIIRADTIGALEALSKELEGHQIQVMRATVGPVTRHDVIEAGTIKDPLYSAIIAFNTPVLPDAVDALADTAMSHVSIFEGGVIYQLIDDYVEWRDEKKQELERQKFEKLIMPAKIRILPNCVFRQSNPAVVGVRILGGKLQSGVDLALPNGKKIGRIKQIQAKNETVQEAEAGKEVAISIEGPTVGRQINVDDDLYVDIPERHVKVIEREVIDHLSPSLRETLEEFTTLKRREDPFWGK</sequence>
<name>IF2P_METMJ</name>
<gene>
    <name evidence="2" type="primary">infB</name>
    <name type="ordered locus">Memar_0461</name>
</gene>
<feature type="chain" id="PRO_1000057658" description="Probable translation initiation factor IF-2">
    <location>
        <begin position="1"/>
        <end position="593"/>
    </location>
</feature>
<feature type="domain" description="tr-type G">
    <location>
        <begin position="7"/>
        <end position="221"/>
    </location>
</feature>
<feature type="region of interest" description="G1" evidence="1">
    <location>
        <begin position="16"/>
        <end position="23"/>
    </location>
</feature>
<feature type="region of interest" description="G2" evidence="1">
    <location>
        <begin position="41"/>
        <end position="45"/>
    </location>
</feature>
<feature type="region of interest" description="G3" evidence="1">
    <location>
        <begin position="77"/>
        <end position="80"/>
    </location>
</feature>
<feature type="region of interest" description="G4" evidence="1">
    <location>
        <begin position="131"/>
        <end position="134"/>
    </location>
</feature>
<feature type="region of interest" description="G5" evidence="1">
    <location>
        <begin position="199"/>
        <end position="201"/>
    </location>
</feature>
<feature type="binding site" evidence="2">
    <location>
        <begin position="16"/>
        <end position="23"/>
    </location>
    <ligand>
        <name>GTP</name>
        <dbReference type="ChEBI" id="CHEBI:37565"/>
    </ligand>
</feature>
<feature type="binding site" evidence="2">
    <location>
        <begin position="77"/>
        <end position="81"/>
    </location>
    <ligand>
        <name>GTP</name>
        <dbReference type="ChEBI" id="CHEBI:37565"/>
    </ligand>
</feature>
<feature type="binding site" evidence="2">
    <location>
        <begin position="131"/>
        <end position="134"/>
    </location>
    <ligand>
        <name>GTP</name>
        <dbReference type="ChEBI" id="CHEBI:37565"/>
    </ligand>
</feature>
<keyword id="KW-0342">GTP-binding</keyword>
<keyword id="KW-0396">Initiation factor</keyword>
<keyword id="KW-0547">Nucleotide-binding</keyword>
<keyword id="KW-0648">Protein biosynthesis</keyword>
<reference key="1">
    <citation type="journal article" date="2009" name="Stand. Genomic Sci.">
        <title>Complete genome sequence of Methanoculleus marisnigri Romesser et al. 1981 type strain JR1.</title>
        <authorList>
            <person name="Anderson I.J."/>
            <person name="Sieprawska-Lupa M."/>
            <person name="Lapidus A."/>
            <person name="Nolan M."/>
            <person name="Copeland A."/>
            <person name="Glavina Del Rio T."/>
            <person name="Tice H."/>
            <person name="Dalin E."/>
            <person name="Barry K."/>
            <person name="Saunders E."/>
            <person name="Han C."/>
            <person name="Brettin T."/>
            <person name="Detter J.C."/>
            <person name="Bruce D."/>
            <person name="Mikhailova N."/>
            <person name="Pitluck S."/>
            <person name="Hauser L."/>
            <person name="Land M."/>
            <person name="Lucas S."/>
            <person name="Richardson P."/>
            <person name="Whitman W.B."/>
            <person name="Kyrpides N.C."/>
        </authorList>
    </citation>
    <scope>NUCLEOTIDE SEQUENCE [LARGE SCALE GENOMIC DNA]</scope>
    <source>
        <strain>ATCC 35101 / DSM 1498 / JR1</strain>
    </source>
</reference>
<organism>
    <name type="scientific">Methanoculleus marisnigri (strain ATCC 35101 / DSM 1498 / JR1)</name>
    <dbReference type="NCBI Taxonomy" id="368407"/>
    <lineage>
        <taxon>Archaea</taxon>
        <taxon>Methanobacteriati</taxon>
        <taxon>Methanobacteriota</taxon>
        <taxon>Stenosarchaea group</taxon>
        <taxon>Methanomicrobia</taxon>
        <taxon>Methanomicrobiales</taxon>
        <taxon>Methanomicrobiaceae</taxon>
        <taxon>Methanoculleus</taxon>
    </lineage>
</organism>